<name>TRPC_SYNY3</name>
<accession>Q55508</accession>
<protein>
    <recommendedName>
        <fullName>Indole-3-glycerol phosphate synthase</fullName>
        <shortName>IGPS</shortName>
        <ecNumber>4.1.1.48</ecNumber>
    </recommendedName>
</protein>
<evidence type="ECO:0000305" key="1"/>
<reference key="1">
    <citation type="journal article" date="1995" name="DNA Res.">
        <title>Sequence analysis of the genome of the unicellular cyanobacterium Synechocystis sp. strain PCC6803. I. Sequence features in the 1 Mb region from map positions 64% to 92% of the genome.</title>
        <authorList>
            <person name="Kaneko T."/>
            <person name="Tanaka A."/>
            <person name="Sato S."/>
            <person name="Kotani H."/>
            <person name="Sazuka T."/>
            <person name="Miyajima N."/>
            <person name="Sugiura M."/>
            <person name="Tabata S."/>
        </authorList>
    </citation>
    <scope>NUCLEOTIDE SEQUENCE [LARGE SCALE GENOMIC DNA]</scope>
    <source>
        <strain>ATCC 27184 / PCC 6803 / N-1</strain>
    </source>
</reference>
<reference key="2">
    <citation type="journal article" date="1996" name="DNA Res.">
        <title>Sequence analysis of the genome of the unicellular cyanobacterium Synechocystis sp. strain PCC6803. II. Sequence determination of the entire genome and assignment of potential protein-coding regions.</title>
        <authorList>
            <person name="Kaneko T."/>
            <person name="Sato S."/>
            <person name="Kotani H."/>
            <person name="Tanaka A."/>
            <person name="Asamizu E."/>
            <person name="Nakamura Y."/>
            <person name="Miyajima N."/>
            <person name="Hirosawa M."/>
            <person name="Sugiura M."/>
            <person name="Sasamoto S."/>
            <person name="Kimura T."/>
            <person name="Hosouchi T."/>
            <person name="Matsuno A."/>
            <person name="Muraki A."/>
            <person name="Nakazaki N."/>
            <person name="Naruo K."/>
            <person name="Okumura S."/>
            <person name="Shimpo S."/>
            <person name="Takeuchi C."/>
            <person name="Wada T."/>
            <person name="Watanabe A."/>
            <person name="Yamada M."/>
            <person name="Yasuda M."/>
            <person name="Tabata S."/>
        </authorList>
    </citation>
    <scope>NUCLEOTIDE SEQUENCE [LARGE SCALE GENOMIC DNA]</scope>
    <source>
        <strain>ATCC 27184 / PCC 6803 / Kazusa</strain>
    </source>
</reference>
<sequence length="295" mass="32952">MEIRRRPPNPPIKVDILQYQIKHPEAAPRHILEEIVWHKEKEVAQRRELVPLVKLQSLVKDMTPPLDFVGALRQSPRQPALIAEVKKASPSKGIIRADFDPVAIAKAYEAGGANCLSVLTDEKFFQGSFENLQLVRSAVQLPLLCKEFIIYPYQIYLARSRGADAVLLIAAILSDKDLRYFLKIIEGLGMAALVEVHTLEEMDRVLALDGVQLIGVNNRNLQTFTVDLQTTEDLFAQRREQLTQGDITLVSESGIYELADLQRLQQAGARAVLVGESLVKQPDPQQAIAALYGEV</sequence>
<comment type="catalytic activity">
    <reaction>
        <text>1-(2-carboxyphenylamino)-1-deoxy-D-ribulose 5-phosphate + H(+) = (1S,2R)-1-C-(indol-3-yl)glycerol 3-phosphate + CO2 + H2O</text>
        <dbReference type="Rhea" id="RHEA:23476"/>
        <dbReference type="ChEBI" id="CHEBI:15377"/>
        <dbReference type="ChEBI" id="CHEBI:15378"/>
        <dbReference type="ChEBI" id="CHEBI:16526"/>
        <dbReference type="ChEBI" id="CHEBI:58613"/>
        <dbReference type="ChEBI" id="CHEBI:58866"/>
        <dbReference type="EC" id="4.1.1.48"/>
    </reaction>
</comment>
<comment type="pathway">
    <text>Amino-acid biosynthesis; L-tryptophan biosynthesis; L-tryptophan from chorismate: step 4/5.</text>
</comment>
<comment type="similarity">
    <text evidence="1">Belongs to the TrpC family.</text>
</comment>
<organism>
    <name type="scientific">Synechocystis sp. (strain ATCC 27184 / PCC 6803 / Kazusa)</name>
    <dbReference type="NCBI Taxonomy" id="1111708"/>
    <lineage>
        <taxon>Bacteria</taxon>
        <taxon>Bacillati</taxon>
        <taxon>Cyanobacteriota</taxon>
        <taxon>Cyanophyceae</taxon>
        <taxon>Synechococcales</taxon>
        <taxon>Merismopediaceae</taxon>
        <taxon>Synechocystis</taxon>
    </lineage>
</organism>
<proteinExistence type="inferred from homology"/>
<gene>
    <name type="primary">trpC</name>
    <name type="ordered locus">slr0546</name>
</gene>
<keyword id="KW-0028">Amino-acid biosynthesis</keyword>
<keyword id="KW-0057">Aromatic amino acid biosynthesis</keyword>
<keyword id="KW-0210">Decarboxylase</keyword>
<keyword id="KW-0456">Lyase</keyword>
<keyword id="KW-1185">Reference proteome</keyword>
<keyword id="KW-0822">Tryptophan biosynthesis</keyword>
<feature type="chain" id="PRO_0000154265" description="Indole-3-glycerol phosphate synthase">
    <location>
        <begin position="1"/>
        <end position="295"/>
    </location>
</feature>
<dbReference type="EC" id="4.1.1.48"/>
<dbReference type="EMBL" id="BA000022">
    <property type="protein sequence ID" value="BAA10863.1"/>
    <property type="molecule type" value="Genomic_DNA"/>
</dbReference>
<dbReference type="PIR" id="S76016">
    <property type="entry name" value="S76016"/>
</dbReference>
<dbReference type="SMR" id="Q55508"/>
<dbReference type="FunCoup" id="Q55508">
    <property type="interactions" value="425"/>
</dbReference>
<dbReference type="IntAct" id="Q55508">
    <property type="interactions" value="4"/>
</dbReference>
<dbReference type="STRING" id="1148.gene:10500369"/>
<dbReference type="PaxDb" id="1148-1001373"/>
<dbReference type="EnsemblBacteria" id="BAA10863">
    <property type="protein sequence ID" value="BAA10863"/>
    <property type="gene ID" value="BAA10863"/>
</dbReference>
<dbReference type="KEGG" id="syn:slr0546"/>
<dbReference type="eggNOG" id="COG0134">
    <property type="taxonomic scope" value="Bacteria"/>
</dbReference>
<dbReference type="InParanoid" id="Q55508"/>
<dbReference type="PhylomeDB" id="Q55508"/>
<dbReference type="UniPathway" id="UPA00035">
    <property type="reaction ID" value="UER00043"/>
</dbReference>
<dbReference type="Proteomes" id="UP000001425">
    <property type="component" value="Chromosome"/>
</dbReference>
<dbReference type="GO" id="GO:0004425">
    <property type="term" value="F:indole-3-glycerol-phosphate synthase activity"/>
    <property type="evidence" value="ECO:0000318"/>
    <property type="project" value="GO_Central"/>
</dbReference>
<dbReference type="GO" id="GO:0004640">
    <property type="term" value="F:phosphoribosylanthranilate isomerase activity"/>
    <property type="evidence" value="ECO:0000318"/>
    <property type="project" value="GO_Central"/>
</dbReference>
<dbReference type="GO" id="GO:0000162">
    <property type="term" value="P:L-tryptophan biosynthetic process"/>
    <property type="evidence" value="ECO:0000318"/>
    <property type="project" value="GO_Central"/>
</dbReference>
<dbReference type="CDD" id="cd00331">
    <property type="entry name" value="IGPS"/>
    <property type="match status" value="1"/>
</dbReference>
<dbReference type="FunFam" id="3.20.20.70:FF:000024">
    <property type="entry name" value="Indole-3-glycerol phosphate synthase"/>
    <property type="match status" value="1"/>
</dbReference>
<dbReference type="Gene3D" id="3.20.20.70">
    <property type="entry name" value="Aldolase class I"/>
    <property type="match status" value="1"/>
</dbReference>
<dbReference type="HAMAP" id="MF_00134_B">
    <property type="entry name" value="IGPS_B"/>
    <property type="match status" value="1"/>
</dbReference>
<dbReference type="InterPro" id="IPR013785">
    <property type="entry name" value="Aldolase_TIM"/>
</dbReference>
<dbReference type="InterPro" id="IPR045186">
    <property type="entry name" value="Indole-3-glycerol_P_synth"/>
</dbReference>
<dbReference type="InterPro" id="IPR013798">
    <property type="entry name" value="Indole-3-glycerol_P_synth_dom"/>
</dbReference>
<dbReference type="InterPro" id="IPR001468">
    <property type="entry name" value="Indole-3-GlycerolPSynthase_CS"/>
</dbReference>
<dbReference type="InterPro" id="IPR011060">
    <property type="entry name" value="RibuloseP-bd_barrel"/>
</dbReference>
<dbReference type="NCBIfam" id="NF001372">
    <property type="entry name" value="PRK00278.1-4"/>
    <property type="match status" value="1"/>
</dbReference>
<dbReference type="NCBIfam" id="NF001377">
    <property type="entry name" value="PRK00278.2-4"/>
    <property type="match status" value="1"/>
</dbReference>
<dbReference type="PANTHER" id="PTHR22854:SF2">
    <property type="entry name" value="INDOLE-3-GLYCEROL-PHOSPHATE SYNTHASE"/>
    <property type="match status" value="1"/>
</dbReference>
<dbReference type="PANTHER" id="PTHR22854">
    <property type="entry name" value="TRYPTOPHAN BIOSYNTHESIS PROTEIN"/>
    <property type="match status" value="1"/>
</dbReference>
<dbReference type="Pfam" id="PF00218">
    <property type="entry name" value="IGPS"/>
    <property type="match status" value="1"/>
</dbReference>
<dbReference type="SUPFAM" id="SSF51366">
    <property type="entry name" value="Ribulose-phoshate binding barrel"/>
    <property type="match status" value="1"/>
</dbReference>
<dbReference type="PROSITE" id="PS00614">
    <property type="entry name" value="IGPS"/>
    <property type="match status" value="1"/>
</dbReference>